<feature type="chain" id="PRO_0000091416" description="Elongation factor Tu">
    <location>
        <begin position="1"/>
        <end position="409"/>
    </location>
</feature>
<feature type="domain" description="tr-type G">
    <location>
        <begin position="10"/>
        <end position="214"/>
    </location>
</feature>
<feature type="region of interest" description="G1" evidence="1">
    <location>
        <begin position="19"/>
        <end position="26"/>
    </location>
</feature>
<feature type="region of interest" description="G2" evidence="1">
    <location>
        <begin position="60"/>
        <end position="64"/>
    </location>
</feature>
<feature type="region of interest" description="G3" evidence="1">
    <location>
        <begin position="81"/>
        <end position="84"/>
    </location>
</feature>
<feature type="region of interest" description="G4" evidence="1">
    <location>
        <begin position="136"/>
        <end position="139"/>
    </location>
</feature>
<feature type="region of interest" description="G5" evidence="1">
    <location>
        <begin position="174"/>
        <end position="176"/>
    </location>
</feature>
<feature type="binding site" evidence="2">
    <location>
        <begin position="19"/>
        <end position="26"/>
    </location>
    <ligand>
        <name>GTP</name>
        <dbReference type="ChEBI" id="CHEBI:37565"/>
    </ligand>
</feature>
<feature type="binding site" evidence="2">
    <location>
        <position position="26"/>
    </location>
    <ligand>
        <name>Mg(2+)</name>
        <dbReference type="ChEBI" id="CHEBI:18420"/>
    </ligand>
</feature>
<feature type="binding site" evidence="2">
    <location>
        <begin position="81"/>
        <end position="85"/>
    </location>
    <ligand>
        <name>GTP</name>
        <dbReference type="ChEBI" id="CHEBI:37565"/>
    </ligand>
</feature>
<feature type="binding site" evidence="2">
    <location>
        <begin position="136"/>
        <end position="139"/>
    </location>
    <ligand>
        <name>GTP</name>
        <dbReference type="ChEBI" id="CHEBI:37565"/>
    </ligand>
</feature>
<reference key="1">
    <citation type="journal article" date="1989" name="Mol. Gen. Genet.">
        <title>Genes for the ribosomal proteins S12 and S7 and elongation factors EF-G and EF-Tu of the cyanobacterium, Anacystis nidulans: structural homology between 16S rRNA and S7 mRNA.</title>
        <authorList>
            <person name="Meng B.-Y."/>
            <person name="Shinozaki K."/>
            <person name="Sugiura M."/>
        </authorList>
    </citation>
    <scope>NUCLEOTIDE SEQUENCE [GENOMIC DNA]</scope>
</reference>
<reference key="2">
    <citation type="journal article" date="2007" name="Photosyn. Res.">
        <title>Complete nucleotide sequence of the freshwater unicellular cyanobacterium Synechococcus elongatus PCC 6301 chromosome: gene content and organization.</title>
        <authorList>
            <person name="Sugita C."/>
            <person name="Ogata K."/>
            <person name="Shikata M."/>
            <person name="Jikuya H."/>
            <person name="Takano J."/>
            <person name="Furumichi M."/>
            <person name="Kanehisa M."/>
            <person name="Omata T."/>
            <person name="Sugiura M."/>
            <person name="Sugita M."/>
        </authorList>
    </citation>
    <scope>NUCLEOTIDE SEQUENCE [LARGE SCALE GENOMIC DNA]</scope>
    <source>
        <strain>ATCC 27144 / PCC 6301 / SAUG 1402/1</strain>
    </source>
</reference>
<protein>
    <recommendedName>
        <fullName evidence="2">Elongation factor Tu</fullName>
        <shortName evidence="2">EF-Tu</shortName>
        <ecNumber evidence="2">3.6.5.3</ecNumber>
    </recommendedName>
</protein>
<proteinExistence type="inferred from homology"/>
<sequence length="409" mass="44190">MARAKFERTKPHANIGTIGHVDHGKTTLTAAITTVLAKAGMAKARAYADIDAAPEEKARGITINTAHVEYETGNRHYAHVDCPGHADYVKNMITGAAQMDGAILVVSAADGPMPQTREHILLAKQVGVPNIVVFLNKEDMVDDAELLELVELEVRELLSSYDFPGDDIPIVAGSALQALEAIQGGASGQKGDNPWVDKILKLMEEVDAYIPTPEREVDRPFLMAVEDVFTITGRGTVATGRIERGSVKVGETIEIVGLRDTRSTTVTGVEMFQKTLDEGLAGDNVGLLLRGIQKTDIERGMVLAKPGSITPHTKFESEVYVLKKEEGGRHTPFFPGYRPQFYVRTTDVTGAISDFTADDGSAAEMVIPGDRIKMTVELINPIAIEQGMRFAIREGGRTIGAGVVSKILQ</sequence>
<gene>
    <name evidence="2" type="primary">tuf</name>
    <name type="synonym">tufA</name>
    <name type="ordered locus">syc0656_d</name>
</gene>
<evidence type="ECO:0000250" key="1"/>
<evidence type="ECO:0000255" key="2">
    <source>
        <dbReference type="HAMAP-Rule" id="MF_00118"/>
    </source>
</evidence>
<accession>P18668</accession>
<comment type="function">
    <text evidence="2">GTP hydrolase that promotes the GTP-dependent binding of aminoacyl-tRNA to the A-site of ribosomes during protein biosynthesis.</text>
</comment>
<comment type="catalytic activity">
    <reaction evidence="2">
        <text>GTP + H2O = GDP + phosphate + H(+)</text>
        <dbReference type="Rhea" id="RHEA:19669"/>
        <dbReference type="ChEBI" id="CHEBI:15377"/>
        <dbReference type="ChEBI" id="CHEBI:15378"/>
        <dbReference type="ChEBI" id="CHEBI:37565"/>
        <dbReference type="ChEBI" id="CHEBI:43474"/>
        <dbReference type="ChEBI" id="CHEBI:58189"/>
        <dbReference type="EC" id="3.6.5.3"/>
    </reaction>
    <physiologicalReaction direction="left-to-right" evidence="2">
        <dbReference type="Rhea" id="RHEA:19670"/>
    </physiologicalReaction>
</comment>
<comment type="subunit">
    <text evidence="2">Monomer.</text>
</comment>
<comment type="subcellular location">
    <subcellularLocation>
        <location evidence="2">Cytoplasm</location>
    </subcellularLocation>
</comment>
<comment type="similarity">
    <text evidence="2">Belongs to the TRAFAC class translation factor GTPase superfamily. Classic translation factor GTPase family. EF-Tu/EF-1A subfamily.</text>
</comment>
<organism>
    <name type="scientific">Synechococcus sp. (strain ATCC 27144 / PCC 6301 / SAUG 1402/1)</name>
    <name type="common">Anacystis nidulans</name>
    <dbReference type="NCBI Taxonomy" id="269084"/>
    <lineage>
        <taxon>Bacteria</taxon>
        <taxon>Bacillati</taxon>
        <taxon>Cyanobacteriota</taxon>
        <taxon>Cyanophyceae</taxon>
        <taxon>Synechococcales</taxon>
        <taxon>Synechococcaceae</taxon>
        <taxon>Synechococcus</taxon>
    </lineage>
</organism>
<keyword id="KW-0963">Cytoplasm</keyword>
<keyword id="KW-0251">Elongation factor</keyword>
<keyword id="KW-0342">GTP-binding</keyword>
<keyword id="KW-0378">Hydrolase</keyword>
<keyword id="KW-0460">Magnesium</keyword>
<keyword id="KW-0479">Metal-binding</keyword>
<keyword id="KW-0547">Nucleotide-binding</keyword>
<keyword id="KW-0648">Protein biosynthesis</keyword>
<name>EFTU_SYNP6</name>
<dbReference type="EC" id="3.6.5.3" evidence="2"/>
<dbReference type="EMBL" id="X17442">
    <property type="protein sequence ID" value="CAA35496.1"/>
    <property type="molecule type" value="Genomic_DNA"/>
</dbReference>
<dbReference type="EMBL" id="AP008231">
    <property type="protein sequence ID" value="BAD78846.1"/>
    <property type="molecule type" value="Genomic_DNA"/>
</dbReference>
<dbReference type="PIR" id="S04430">
    <property type="entry name" value="S04430"/>
</dbReference>
<dbReference type="RefSeq" id="WP_011242968.1">
    <property type="nucleotide sequence ID" value="NZ_CP085785.1"/>
</dbReference>
<dbReference type="SMR" id="P18668"/>
<dbReference type="GeneID" id="72429733"/>
<dbReference type="KEGG" id="syc:syc0656_d"/>
<dbReference type="eggNOG" id="COG0050">
    <property type="taxonomic scope" value="Bacteria"/>
</dbReference>
<dbReference type="Proteomes" id="UP000001175">
    <property type="component" value="Chromosome"/>
</dbReference>
<dbReference type="GO" id="GO:0005829">
    <property type="term" value="C:cytosol"/>
    <property type="evidence" value="ECO:0007669"/>
    <property type="project" value="TreeGrafter"/>
</dbReference>
<dbReference type="GO" id="GO:0005525">
    <property type="term" value="F:GTP binding"/>
    <property type="evidence" value="ECO:0007669"/>
    <property type="project" value="UniProtKB-UniRule"/>
</dbReference>
<dbReference type="GO" id="GO:0003924">
    <property type="term" value="F:GTPase activity"/>
    <property type="evidence" value="ECO:0007669"/>
    <property type="project" value="InterPro"/>
</dbReference>
<dbReference type="GO" id="GO:0003746">
    <property type="term" value="F:translation elongation factor activity"/>
    <property type="evidence" value="ECO:0007669"/>
    <property type="project" value="UniProtKB-UniRule"/>
</dbReference>
<dbReference type="CDD" id="cd01884">
    <property type="entry name" value="EF_Tu"/>
    <property type="match status" value="1"/>
</dbReference>
<dbReference type="CDD" id="cd03697">
    <property type="entry name" value="EFTU_II"/>
    <property type="match status" value="1"/>
</dbReference>
<dbReference type="CDD" id="cd03707">
    <property type="entry name" value="EFTU_III"/>
    <property type="match status" value="1"/>
</dbReference>
<dbReference type="FunFam" id="2.40.30.10:FF:000001">
    <property type="entry name" value="Elongation factor Tu"/>
    <property type="match status" value="1"/>
</dbReference>
<dbReference type="FunFam" id="2.40.30.10:FF:000046">
    <property type="entry name" value="Elongation factor Tu"/>
    <property type="match status" value="1"/>
</dbReference>
<dbReference type="FunFam" id="3.40.50.300:FF:000003">
    <property type="entry name" value="Elongation factor Tu"/>
    <property type="match status" value="1"/>
</dbReference>
<dbReference type="Gene3D" id="3.40.50.300">
    <property type="entry name" value="P-loop containing nucleotide triphosphate hydrolases"/>
    <property type="match status" value="1"/>
</dbReference>
<dbReference type="Gene3D" id="2.40.30.10">
    <property type="entry name" value="Translation factors"/>
    <property type="match status" value="2"/>
</dbReference>
<dbReference type="HAMAP" id="MF_00118_B">
    <property type="entry name" value="EF_Tu_B"/>
    <property type="match status" value="1"/>
</dbReference>
<dbReference type="InterPro" id="IPR041709">
    <property type="entry name" value="EF-Tu_GTP-bd"/>
</dbReference>
<dbReference type="InterPro" id="IPR050055">
    <property type="entry name" value="EF-Tu_GTPase"/>
</dbReference>
<dbReference type="InterPro" id="IPR004161">
    <property type="entry name" value="EFTu-like_2"/>
</dbReference>
<dbReference type="InterPro" id="IPR033720">
    <property type="entry name" value="EFTU_2"/>
</dbReference>
<dbReference type="InterPro" id="IPR031157">
    <property type="entry name" value="G_TR_CS"/>
</dbReference>
<dbReference type="InterPro" id="IPR027417">
    <property type="entry name" value="P-loop_NTPase"/>
</dbReference>
<dbReference type="InterPro" id="IPR005225">
    <property type="entry name" value="Small_GTP-bd"/>
</dbReference>
<dbReference type="InterPro" id="IPR000795">
    <property type="entry name" value="T_Tr_GTP-bd_dom"/>
</dbReference>
<dbReference type="InterPro" id="IPR009000">
    <property type="entry name" value="Transl_B-barrel_sf"/>
</dbReference>
<dbReference type="InterPro" id="IPR009001">
    <property type="entry name" value="Transl_elong_EF1A/Init_IF2_C"/>
</dbReference>
<dbReference type="InterPro" id="IPR004541">
    <property type="entry name" value="Transl_elong_EFTu/EF1A_bac/org"/>
</dbReference>
<dbReference type="InterPro" id="IPR004160">
    <property type="entry name" value="Transl_elong_EFTu/EF1A_C"/>
</dbReference>
<dbReference type="NCBIfam" id="TIGR00485">
    <property type="entry name" value="EF-Tu"/>
    <property type="match status" value="1"/>
</dbReference>
<dbReference type="NCBIfam" id="NF000766">
    <property type="entry name" value="PRK00049.1"/>
    <property type="match status" value="1"/>
</dbReference>
<dbReference type="NCBIfam" id="NF009372">
    <property type="entry name" value="PRK12735.1"/>
    <property type="match status" value="1"/>
</dbReference>
<dbReference type="NCBIfam" id="NF009373">
    <property type="entry name" value="PRK12736.1"/>
    <property type="match status" value="1"/>
</dbReference>
<dbReference type="NCBIfam" id="TIGR00231">
    <property type="entry name" value="small_GTP"/>
    <property type="match status" value="1"/>
</dbReference>
<dbReference type="PANTHER" id="PTHR43721:SF22">
    <property type="entry name" value="ELONGATION FACTOR TU, MITOCHONDRIAL"/>
    <property type="match status" value="1"/>
</dbReference>
<dbReference type="PANTHER" id="PTHR43721">
    <property type="entry name" value="ELONGATION FACTOR TU-RELATED"/>
    <property type="match status" value="1"/>
</dbReference>
<dbReference type="Pfam" id="PF00009">
    <property type="entry name" value="GTP_EFTU"/>
    <property type="match status" value="1"/>
</dbReference>
<dbReference type="Pfam" id="PF03144">
    <property type="entry name" value="GTP_EFTU_D2"/>
    <property type="match status" value="1"/>
</dbReference>
<dbReference type="Pfam" id="PF03143">
    <property type="entry name" value="GTP_EFTU_D3"/>
    <property type="match status" value="1"/>
</dbReference>
<dbReference type="PRINTS" id="PR00315">
    <property type="entry name" value="ELONGATNFCT"/>
</dbReference>
<dbReference type="SUPFAM" id="SSF50465">
    <property type="entry name" value="EF-Tu/eEF-1alpha/eIF2-gamma C-terminal domain"/>
    <property type="match status" value="1"/>
</dbReference>
<dbReference type="SUPFAM" id="SSF52540">
    <property type="entry name" value="P-loop containing nucleoside triphosphate hydrolases"/>
    <property type="match status" value="1"/>
</dbReference>
<dbReference type="SUPFAM" id="SSF50447">
    <property type="entry name" value="Translation proteins"/>
    <property type="match status" value="1"/>
</dbReference>
<dbReference type="PROSITE" id="PS00301">
    <property type="entry name" value="G_TR_1"/>
    <property type="match status" value="1"/>
</dbReference>
<dbReference type="PROSITE" id="PS51722">
    <property type="entry name" value="G_TR_2"/>
    <property type="match status" value="1"/>
</dbReference>